<gene>
    <name evidence="1" type="primary">glgA</name>
    <name type="ordered locus">SPJ_1061</name>
</gene>
<dbReference type="EC" id="2.4.1.21" evidence="1"/>
<dbReference type="EMBL" id="CP000919">
    <property type="protein sequence ID" value="ACO19297.1"/>
    <property type="molecule type" value="Genomic_DNA"/>
</dbReference>
<dbReference type="RefSeq" id="WP_000697290.1">
    <property type="nucleotide sequence ID" value="NC_012466.1"/>
</dbReference>
<dbReference type="SMR" id="C1CEB0"/>
<dbReference type="CAZy" id="GT5">
    <property type="family name" value="Glycosyltransferase Family 5"/>
</dbReference>
<dbReference type="KEGG" id="sjj:SPJ_1061"/>
<dbReference type="HOGENOM" id="CLU_009583_18_2_9"/>
<dbReference type="UniPathway" id="UPA00164"/>
<dbReference type="Proteomes" id="UP000002206">
    <property type="component" value="Chromosome"/>
</dbReference>
<dbReference type="GO" id="GO:0009011">
    <property type="term" value="F:alpha-1,4-glucan glucosyltransferase (ADP-glucose donor) activity"/>
    <property type="evidence" value="ECO:0007669"/>
    <property type="project" value="UniProtKB-UniRule"/>
</dbReference>
<dbReference type="GO" id="GO:0004373">
    <property type="term" value="F:alpha-1,4-glucan glucosyltransferase (UDP-glucose donor) activity"/>
    <property type="evidence" value="ECO:0007669"/>
    <property type="project" value="InterPro"/>
</dbReference>
<dbReference type="GO" id="GO:0005978">
    <property type="term" value="P:glycogen biosynthetic process"/>
    <property type="evidence" value="ECO:0007669"/>
    <property type="project" value="UniProtKB-UniRule"/>
</dbReference>
<dbReference type="CDD" id="cd03791">
    <property type="entry name" value="GT5_Glycogen_synthase_DULL1-like"/>
    <property type="match status" value="1"/>
</dbReference>
<dbReference type="Gene3D" id="3.40.50.2000">
    <property type="entry name" value="Glycogen Phosphorylase B"/>
    <property type="match status" value="2"/>
</dbReference>
<dbReference type="HAMAP" id="MF_00484">
    <property type="entry name" value="Glycogen_synth"/>
    <property type="match status" value="1"/>
</dbReference>
<dbReference type="InterPro" id="IPR001296">
    <property type="entry name" value="Glyco_trans_1"/>
</dbReference>
<dbReference type="InterPro" id="IPR011835">
    <property type="entry name" value="GS/SS"/>
</dbReference>
<dbReference type="InterPro" id="IPR013534">
    <property type="entry name" value="Starch_synth_cat_dom"/>
</dbReference>
<dbReference type="NCBIfam" id="TIGR02095">
    <property type="entry name" value="glgA"/>
    <property type="match status" value="1"/>
</dbReference>
<dbReference type="NCBIfam" id="NF001898">
    <property type="entry name" value="PRK00654.1-1"/>
    <property type="match status" value="1"/>
</dbReference>
<dbReference type="PANTHER" id="PTHR45825:SF11">
    <property type="entry name" value="ALPHA AMYLASE DOMAIN-CONTAINING PROTEIN"/>
    <property type="match status" value="1"/>
</dbReference>
<dbReference type="PANTHER" id="PTHR45825">
    <property type="entry name" value="GRANULE-BOUND STARCH SYNTHASE 1, CHLOROPLASTIC/AMYLOPLASTIC"/>
    <property type="match status" value="1"/>
</dbReference>
<dbReference type="Pfam" id="PF08323">
    <property type="entry name" value="Glyco_transf_5"/>
    <property type="match status" value="1"/>
</dbReference>
<dbReference type="Pfam" id="PF00534">
    <property type="entry name" value="Glycos_transf_1"/>
    <property type="match status" value="1"/>
</dbReference>
<dbReference type="SUPFAM" id="SSF53756">
    <property type="entry name" value="UDP-Glycosyltransferase/glycogen phosphorylase"/>
    <property type="match status" value="1"/>
</dbReference>
<keyword id="KW-0320">Glycogen biosynthesis</keyword>
<keyword id="KW-0328">Glycosyltransferase</keyword>
<keyword id="KW-0808">Transferase</keyword>
<name>GLGA_STRZJ</name>
<proteinExistence type="inferred from homology"/>
<accession>C1CEB0</accession>
<organism>
    <name type="scientific">Streptococcus pneumoniae (strain JJA)</name>
    <dbReference type="NCBI Taxonomy" id="488222"/>
    <lineage>
        <taxon>Bacteria</taxon>
        <taxon>Bacillati</taxon>
        <taxon>Bacillota</taxon>
        <taxon>Bacilli</taxon>
        <taxon>Lactobacillales</taxon>
        <taxon>Streptococcaceae</taxon>
        <taxon>Streptococcus</taxon>
    </lineage>
</organism>
<comment type="function">
    <text evidence="1">Synthesizes alpha-1,4-glucan chains using ADP-glucose.</text>
</comment>
<comment type="catalytic activity">
    <reaction evidence="1">
        <text>[(1-&gt;4)-alpha-D-glucosyl](n) + ADP-alpha-D-glucose = [(1-&gt;4)-alpha-D-glucosyl](n+1) + ADP + H(+)</text>
        <dbReference type="Rhea" id="RHEA:18189"/>
        <dbReference type="Rhea" id="RHEA-COMP:9584"/>
        <dbReference type="Rhea" id="RHEA-COMP:9587"/>
        <dbReference type="ChEBI" id="CHEBI:15378"/>
        <dbReference type="ChEBI" id="CHEBI:15444"/>
        <dbReference type="ChEBI" id="CHEBI:57498"/>
        <dbReference type="ChEBI" id="CHEBI:456216"/>
        <dbReference type="EC" id="2.4.1.21"/>
    </reaction>
</comment>
<comment type="pathway">
    <text evidence="1">Glycan biosynthesis; glycogen biosynthesis.</text>
</comment>
<comment type="similarity">
    <text evidence="1">Belongs to the glycosyltransferase 1 family. Bacterial/plant glycogen synthase subfamily.</text>
</comment>
<protein>
    <recommendedName>
        <fullName evidence="1">Glycogen synthase</fullName>
        <ecNumber evidence="1">2.4.1.21</ecNumber>
    </recommendedName>
    <alternativeName>
        <fullName evidence="1">Starch [bacterial glycogen] synthase</fullName>
    </alternativeName>
</protein>
<evidence type="ECO:0000255" key="1">
    <source>
        <dbReference type="HAMAP-Rule" id="MF_00484"/>
    </source>
</evidence>
<reference key="1">
    <citation type="journal article" date="2010" name="Genome Biol.">
        <title>Structure and dynamics of the pan-genome of Streptococcus pneumoniae and closely related species.</title>
        <authorList>
            <person name="Donati C."/>
            <person name="Hiller N.L."/>
            <person name="Tettelin H."/>
            <person name="Muzzi A."/>
            <person name="Croucher N.J."/>
            <person name="Angiuoli S.V."/>
            <person name="Oggioni M."/>
            <person name="Dunning Hotopp J.C."/>
            <person name="Hu F.Z."/>
            <person name="Riley D.R."/>
            <person name="Covacci A."/>
            <person name="Mitchell T.J."/>
            <person name="Bentley S.D."/>
            <person name="Kilian M."/>
            <person name="Ehrlich G.D."/>
            <person name="Rappuoli R."/>
            <person name="Moxon E.R."/>
            <person name="Masignani V."/>
        </authorList>
    </citation>
    <scope>NUCLEOTIDE SEQUENCE [LARGE SCALE GENOMIC DNA]</scope>
    <source>
        <strain>JJA</strain>
    </source>
</reference>
<feature type="chain" id="PRO_1000190086" description="Glycogen synthase">
    <location>
        <begin position="1"/>
        <end position="477"/>
    </location>
</feature>
<feature type="binding site" evidence="1">
    <location>
        <position position="15"/>
    </location>
    <ligand>
        <name>ADP-alpha-D-glucose</name>
        <dbReference type="ChEBI" id="CHEBI:57498"/>
    </ligand>
</feature>
<sequence length="477" mass="54042">MKILFVAAEGAPFSKTGGLGDVIGALPKSLVKAGHEVAVILPYYDMVEAKFGNQIEDVLHFEVSVGWRRQYCGIKKTVLNGVTFYFIDNQYYFFRGHVYGDFDDGERFAFFQLAAIEAMERIDFIPDLLHVHDYHTAMIPFLLKEKYCWIQAYEDIETVLTIHNLEFQGQFSEGMLGDLFGVGLERYADGTLRWNNCLNWMKAGILYANRVSTVSPSYAHEIMTSQFGCNLDQILKMESGKVSGIVNGIDADLYNPQTDALLDYHFNQEDLSGKAKNKAKLQERVGLPVRADVPLVGIVSRLTRQKGFDVVVESLHHILQEDVQIVLLGTGDPAFEGAFSWFAQIYPDKLSANITFDVKLAQEIYAACDLFLMPSRFEPCGLSQMMAMRYGTLPLVHEVGGLRDTVRAFNPIEGSGTGFSFDNLSPYWLNWTFQTALDLYRNHPDIWRNLQKQAMESDFSWDTACKSYLDLYHSLVN</sequence>